<proteinExistence type="inferred from homology"/>
<dbReference type="EC" id="2.1.2.3" evidence="1"/>
<dbReference type="EC" id="3.5.4.10" evidence="1"/>
<dbReference type="EMBL" id="CP000410">
    <property type="protein sequence ID" value="ABJ54358.1"/>
    <property type="molecule type" value="Genomic_DNA"/>
</dbReference>
<dbReference type="RefSeq" id="WP_000167096.1">
    <property type="nucleotide sequence ID" value="NZ_JAMLJR010000017.1"/>
</dbReference>
<dbReference type="SMR" id="Q04N19"/>
<dbReference type="PaxDb" id="373153-SPD_0057"/>
<dbReference type="KEGG" id="spd:SPD_0057"/>
<dbReference type="eggNOG" id="COG0138">
    <property type="taxonomic scope" value="Bacteria"/>
</dbReference>
<dbReference type="HOGENOM" id="CLU_016316_5_2_9"/>
<dbReference type="BioCyc" id="SPNE373153:G1G6V-57-MONOMER"/>
<dbReference type="UniPathway" id="UPA00074">
    <property type="reaction ID" value="UER00133"/>
</dbReference>
<dbReference type="UniPathway" id="UPA00074">
    <property type="reaction ID" value="UER00135"/>
</dbReference>
<dbReference type="Proteomes" id="UP000001452">
    <property type="component" value="Chromosome"/>
</dbReference>
<dbReference type="GO" id="GO:0005829">
    <property type="term" value="C:cytosol"/>
    <property type="evidence" value="ECO:0007669"/>
    <property type="project" value="TreeGrafter"/>
</dbReference>
<dbReference type="GO" id="GO:0003937">
    <property type="term" value="F:IMP cyclohydrolase activity"/>
    <property type="evidence" value="ECO:0007669"/>
    <property type="project" value="UniProtKB-UniRule"/>
</dbReference>
<dbReference type="GO" id="GO:0004643">
    <property type="term" value="F:phosphoribosylaminoimidazolecarboxamide formyltransferase activity"/>
    <property type="evidence" value="ECO:0007669"/>
    <property type="project" value="UniProtKB-UniRule"/>
</dbReference>
<dbReference type="GO" id="GO:0006189">
    <property type="term" value="P:'de novo' IMP biosynthetic process"/>
    <property type="evidence" value="ECO:0007669"/>
    <property type="project" value="UniProtKB-UniRule"/>
</dbReference>
<dbReference type="CDD" id="cd01421">
    <property type="entry name" value="IMPCH"/>
    <property type="match status" value="1"/>
</dbReference>
<dbReference type="FunFam" id="3.40.140.20:FF:000001">
    <property type="entry name" value="Bifunctional purine biosynthesis protein PurH"/>
    <property type="match status" value="1"/>
</dbReference>
<dbReference type="FunFam" id="3.40.140.20:FF:000002">
    <property type="entry name" value="Bifunctional purine biosynthesis protein PurH"/>
    <property type="match status" value="1"/>
</dbReference>
<dbReference type="FunFam" id="3.40.50.1380:FF:000001">
    <property type="entry name" value="Bifunctional purine biosynthesis protein PurH"/>
    <property type="match status" value="1"/>
</dbReference>
<dbReference type="Gene3D" id="3.40.140.20">
    <property type="match status" value="2"/>
</dbReference>
<dbReference type="Gene3D" id="3.40.50.1380">
    <property type="entry name" value="Methylglyoxal synthase-like domain"/>
    <property type="match status" value="1"/>
</dbReference>
<dbReference type="HAMAP" id="MF_00139">
    <property type="entry name" value="PurH"/>
    <property type="match status" value="1"/>
</dbReference>
<dbReference type="InterPro" id="IPR024051">
    <property type="entry name" value="AICAR_Tfase_dup_dom_sf"/>
</dbReference>
<dbReference type="InterPro" id="IPR016193">
    <property type="entry name" value="Cytidine_deaminase-like"/>
</dbReference>
<dbReference type="InterPro" id="IPR011607">
    <property type="entry name" value="MGS-like_dom"/>
</dbReference>
<dbReference type="InterPro" id="IPR036914">
    <property type="entry name" value="MGS-like_dom_sf"/>
</dbReference>
<dbReference type="InterPro" id="IPR002695">
    <property type="entry name" value="PurH-like"/>
</dbReference>
<dbReference type="NCBIfam" id="NF002049">
    <property type="entry name" value="PRK00881.1"/>
    <property type="match status" value="1"/>
</dbReference>
<dbReference type="NCBIfam" id="TIGR00355">
    <property type="entry name" value="purH"/>
    <property type="match status" value="1"/>
</dbReference>
<dbReference type="PANTHER" id="PTHR11692:SF0">
    <property type="entry name" value="BIFUNCTIONAL PURINE BIOSYNTHESIS PROTEIN ATIC"/>
    <property type="match status" value="1"/>
</dbReference>
<dbReference type="PANTHER" id="PTHR11692">
    <property type="entry name" value="BIFUNCTIONAL PURINE BIOSYNTHESIS PROTEIN PURH"/>
    <property type="match status" value="1"/>
</dbReference>
<dbReference type="Pfam" id="PF01808">
    <property type="entry name" value="AICARFT_IMPCHas"/>
    <property type="match status" value="1"/>
</dbReference>
<dbReference type="Pfam" id="PF02142">
    <property type="entry name" value="MGS"/>
    <property type="match status" value="1"/>
</dbReference>
<dbReference type="PIRSF" id="PIRSF000414">
    <property type="entry name" value="AICARFT_IMPCHas"/>
    <property type="match status" value="1"/>
</dbReference>
<dbReference type="SMART" id="SM00798">
    <property type="entry name" value="AICARFT_IMPCHas"/>
    <property type="match status" value="1"/>
</dbReference>
<dbReference type="SMART" id="SM00851">
    <property type="entry name" value="MGS"/>
    <property type="match status" value="1"/>
</dbReference>
<dbReference type="SUPFAM" id="SSF53927">
    <property type="entry name" value="Cytidine deaminase-like"/>
    <property type="match status" value="1"/>
</dbReference>
<dbReference type="SUPFAM" id="SSF52335">
    <property type="entry name" value="Methylglyoxal synthase-like"/>
    <property type="match status" value="1"/>
</dbReference>
<dbReference type="PROSITE" id="PS51855">
    <property type="entry name" value="MGS"/>
    <property type="match status" value="1"/>
</dbReference>
<comment type="catalytic activity">
    <reaction evidence="1">
        <text>(6R)-10-formyltetrahydrofolate + 5-amino-1-(5-phospho-beta-D-ribosyl)imidazole-4-carboxamide = 5-formamido-1-(5-phospho-D-ribosyl)imidazole-4-carboxamide + (6S)-5,6,7,8-tetrahydrofolate</text>
        <dbReference type="Rhea" id="RHEA:22192"/>
        <dbReference type="ChEBI" id="CHEBI:57453"/>
        <dbReference type="ChEBI" id="CHEBI:58467"/>
        <dbReference type="ChEBI" id="CHEBI:58475"/>
        <dbReference type="ChEBI" id="CHEBI:195366"/>
        <dbReference type="EC" id="2.1.2.3"/>
    </reaction>
</comment>
<comment type="catalytic activity">
    <reaction evidence="1">
        <text>IMP + H2O = 5-formamido-1-(5-phospho-D-ribosyl)imidazole-4-carboxamide</text>
        <dbReference type="Rhea" id="RHEA:18445"/>
        <dbReference type="ChEBI" id="CHEBI:15377"/>
        <dbReference type="ChEBI" id="CHEBI:58053"/>
        <dbReference type="ChEBI" id="CHEBI:58467"/>
        <dbReference type="EC" id="3.5.4.10"/>
    </reaction>
</comment>
<comment type="pathway">
    <text evidence="1">Purine metabolism; IMP biosynthesis via de novo pathway; 5-formamido-1-(5-phospho-D-ribosyl)imidazole-4-carboxamide from 5-amino-1-(5-phospho-D-ribosyl)imidazole-4-carboxamide (10-formyl THF route): step 1/1.</text>
</comment>
<comment type="pathway">
    <text evidence="1">Purine metabolism; IMP biosynthesis via de novo pathway; IMP from 5-formamido-1-(5-phospho-D-ribosyl)imidazole-4-carboxamide: step 1/1.</text>
</comment>
<comment type="domain">
    <text evidence="1">The IMP cyclohydrolase activity resides in the N-terminal region.</text>
</comment>
<comment type="similarity">
    <text evidence="1">Belongs to the PurH family.</text>
</comment>
<protein>
    <recommendedName>
        <fullName evidence="1">Bifunctional purine biosynthesis protein PurH</fullName>
    </recommendedName>
    <domain>
        <recommendedName>
            <fullName evidence="1">Phosphoribosylaminoimidazolecarboxamide formyltransferase</fullName>
            <ecNumber evidence="1">2.1.2.3</ecNumber>
        </recommendedName>
        <alternativeName>
            <fullName evidence="1">AICAR transformylase</fullName>
        </alternativeName>
    </domain>
    <domain>
        <recommendedName>
            <fullName evidence="1">IMP cyclohydrolase</fullName>
            <ecNumber evidence="1">3.5.4.10</ecNumber>
        </recommendedName>
        <alternativeName>
            <fullName evidence="1">ATIC</fullName>
        </alternativeName>
        <alternativeName>
            <fullName evidence="1">IMP synthase</fullName>
        </alternativeName>
        <alternativeName>
            <fullName evidence="1">Inosinicase</fullName>
        </alternativeName>
    </domain>
</protein>
<sequence>MTKRVLISVSDKAGIVEFAQELKKLGWEIISTGGTKVALDNAGVETIAIDDVTGFPEMMDGRVKTLHPNIHGGLLARRDLDSHLEAANENQIELIDLVVVNLYPFKETILKPDVTYADAVENIDIGGPSMLRSAAKNHASVTVVVDPADYTVVLDELSANGETTYETRQRLAAKVFRHTAAYDALIAEYFTAQVGESKPEKLTLTYDLKQAMRYGENPQQDADFYQKALPTDYSIASAKQLNGKELSFNNIRDADAAIRIIRDFKDRPTVVALKHMNPCGIGQADDIETAWDYAYESDPVSIFGGIAVLNREVDAATAEKMHGVFLEIIIAPSYTDEALAILINKKKNLRILALPFNAQEASEVEAEYTGVVGGLLVQNQDVVKESPADWQVVTKRQPTETEATALEFAWKAIKYVKSNGIIVTNDHMTLGVGPGQTNRVASVRLAIDQAKDRLDGAVLASDAFFPFADNVEEIAKAGIKAIIQPGGSVRDQESIEAADKYGLTMVFTGVRHFRH</sequence>
<feature type="chain" id="PRO_1000018967" description="Bifunctional purine biosynthesis protein PurH">
    <location>
        <begin position="1"/>
        <end position="515"/>
    </location>
</feature>
<feature type="domain" description="MGS-like" evidence="2">
    <location>
        <begin position="1"/>
        <end position="145"/>
    </location>
</feature>
<evidence type="ECO:0000255" key="1">
    <source>
        <dbReference type="HAMAP-Rule" id="MF_00139"/>
    </source>
</evidence>
<evidence type="ECO:0000255" key="2">
    <source>
        <dbReference type="PROSITE-ProRule" id="PRU01202"/>
    </source>
</evidence>
<gene>
    <name evidence="1" type="primary">purH</name>
    <name type="ordered locus">SPD_0057</name>
</gene>
<organism>
    <name type="scientific">Streptococcus pneumoniae serotype 2 (strain D39 / NCTC 7466)</name>
    <dbReference type="NCBI Taxonomy" id="373153"/>
    <lineage>
        <taxon>Bacteria</taxon>
        <taxon>Bacillati</taxon>
        <taxon>Bacillota</taxon>
        <taxon>Bacilli</taxon>
        <taxon>Lactobacillales</taxon>
        <taxon>Streptococcaceae</taxon>
        <taxon>Streptococcus</taxon>
    </lineage>
</organism>
<accession>Q04N19</accession>
<keyword id="KW-0378">Hydrolase</keyword>
<keyword id="KW-0511">Multifunctional enzyme</keyword>
<keyword id="KW-0658">Purine biosynthesis</keyword>
<keyword id="KW-1185">Reference proteome</keyword>
<keyword id="KW-0808">Transferase</keyword>
<reference key="1">
    <citation type="journal article" date="2007" name="J. Bacteriol.">
        <title>Genome sequence of Avery's virulent serotype 2 strain D39 of Streptococcus pneumoniae and comparison with that of unencapsulated laboratory strain R6.</title>
        <authorList>
            <person name="Lanie J.A."/>
            <person name="Ng W.-L."/>
            <person name="Kazmierczak K.M."/>
            <person name="Andrzejewski T.M."/>
            <person name="Davidsen T.M."/>
            <person name="Wayne K.J."/>
            <person name="Tettelin H."/>
            <person name="Glass J.I."/>
            <person name="Winkler M.E."/>
        </authorList>
    </citation>
    <scope>NUCLEOTIDE SEQUENCE [LARGE SCALE GENOMIC DNA]</scope>
    <source>
        <strain>D39 / NCTC 7466</strain>
    </source>
</reference>
<name>PUR9_STRP2</name>